<protein>
    <recommendedName>
        <fullName evidence="1">Protein ApaG</fullName>
    </recommendedName>
</protein>
<reference key="1">
    <citation type="journal article" date="2006" name="J. Bacteriol.">
        <title>Complete genome sequence of Yersinia pestis strains Antiqua and Nepal516: evidence of gene reduction in an emerging pathogen.</title>
        <authorList>
            <person name="Chain P.S.G."/>
            <person name="Hu P."/>
            <person name="Malfatti S.A."/>
            <person name="Radnedge L."/>
            <person name="Larimer F."/>
            <person name="Vergez L.M."/>
            <person name="Worsham P."/>
            <person name="Chu M.C."/>
            <person name="Andersen G.L."/>
        </authorList>
    </citation>
    <scope>NUCLEOTIDE SEQUENCE [LARGE SCALE GENOMIC DNA]</scope>
    <source>
        <strain>Nepal516</strain>
    </source>
</reference>
<reference key="2">
    <citation type="submission" date="2009-04" db="EMBL/GenBank/DDBJ databases">
        <title>Yersinia pestis Nepal516A whole genome shotgun sequencing project.</title>
        <authorList>
            <person name="Plunkett G. III"/>
            <person name="Anderson B.D."/>
            <person name="Baumler D.J."/>
            <person name="Burland V."/>
            <person name="Cabot E.L."/>
            <person name="Glasner J.D."/>
            <person name="Mau B."/>
            <person name="Neeno-Eckwall E."/>
            <person name="Perna N.T."/>
            <person name="Munk A.C."/>
            <person name="Tapia R."/>
            <person name="Green L.D."/>
            <person name="Rogers Y.C."/>
            <person name="Detter J.C."/>
            <person name="Bruce D.C."/>
            <person name="Brettin T.S."/>
        </authorList>
    </citation>
    <scope>NUCLEOTIDE SEQUENCE [LARGE SCALE GENOMIC DNA]</scope>
    <source>
        <strain>Nepal516</strain>
    </source>
</reference>
<organism>
    <name type="scientific">Yersinia pestis bv. Antiqua (strain Nepal516)</name>
    <dbReference type="NCBI Taxonomy" id="377628"/>
    <lineage>
        <taxon>Bacteria</taxon>
        <taxon>Pseudomonadati</taxon>
        <taxon>Pseudomonadota</taxon>
        <taxon>Gammaproteobacteria</taxon>
        <taxon>Enterobacterales</taxon>
        <taxon>Yersiniaceae</taxon>
        <taxon>Yersinia</taxon>
    </lineage>
</organism>
<dbReference type="EMBL" id="CP000305">
    <property type="protein sequence ID" value="ABG16697.1"/>
    <property type="molecule type" value="Genomic_DNA"/>
</dbReference>
<dbReference type="EMBL" id="ACNQ01000006">
    <property type="protein sequence ID" value="EEO78149.1"/>
    <property type="molecule type" value="Genomic_DNA"/>
</dbReference>
<dbReference type="RefSeq" id="WP_002210491.1">
    <property type="nucleotide sequence ID" value="NZ_ACNQ01000006.1"/>
</dbReference>
<dbReference type="SMR" id="Q1CMT3"/>
<dbReference type="GeneID" id="57974119"/>
<dbReference type="KEGG" id="ypn:YPN_0365"/>
<dbReference type="HOGENOM" id="CLU_128074_0_0_6"/>
<dbReference type="Proteomes" id="UP000008936">
    <property type="component" value="Chromosome"/>
</dbReference>
<dbReference type="GO" id="GO:0070987">
    <property type="term" value="P:error-free translesion synthesis"/>
    <property type="evidence" value="ECO:0007669"/>
    <property type="project" value="TreeGrafter"/>
</dbReference>
<dbReference type="Gene3D" id="2.60.40.1470">
    <property type="entry name" value="ApaG domain"/>
    <property type="match status" value="1"/>
</dbReference>
<dbReference type="HAMAP" id="MF_00791">
    <property type="entry name" value="ApaG"/>
    <property type="match status" value="1"/>
</dbReference>
<dbReference type="InterPro" id="IPR007474">
    <property type="entry name" value="ApaG_domain"/>
</dbReference>
<dbReference type="InterPro" id="IPR036767">
    <property type="entry name" value="ApaG_sf"/>
</dbReference>
<dbReference type="InterPro" id="IPR023065">
    <property type="entry name" value="Uncharacterised_ApaG"/>
</dbReference>
<dbReference type="NCBIfam" id="NF003967">
    <property type="entry name" value="PRK05461.1"/>
    <property type="match status" value="1"/>
</dbReference>
<dbReference type="PANTHER" id="PTHR14289">
    <property type="entry name" value="F-BOX ONLY PROTEIN 3"/>
    <property type="match status" value="1"/>
</dbReference>
<dbReference type="PANTHER" id="PTHR14289:SF16">
    <property type="entry name" value="POLYMERASE DELTA-INTERACTING PROTEIN 2"/>
    <property type="match status" value="1"/>
</dbReference>
<dbReference type="Pfam" id="PF04379">
    <property type="entry name" value="DUF525"/>
    <property type="match status" value="1"/>
</dbReference>
<dbReference type="SUPFAM" id="SSF110069">
    <property type="entry name" value="ApaG-like"/>
    <property type="match status" value="1"/>
</dbReference>
<dbReference type="PROSITE" id="PS51087">
    <property type="entry name" value="APAG"/>
    <property type="match status" value="1"/>
</dbReference>
<proteinExistence type="inferred from homology"/>
<evidence type="ECO:0000255" key="1">
    <source>
        <dbReference type="HAMAP-Rule" id="MF_00791"/>
    </source>
</evidence>
<accession>Q1CMT3</accession>
<accession>C4GNR7</accession>
<sequence length="125" mass="14126">MIEQPRICVQVHSIYVETQSIPEEERFVFAYTVTVRNLGRSNVQLLGRYWLITNSNGRQTEVQGEGVIGEQPLILPGNEFQYTSGAVLETPLGTMEGHYEMIDHLGQAFRTVIPVFRLAIPALIH</sequence>
<name>APAG_YERPN</name>
<gene>
    <name evidence="1" type="primary">apaG</name>
    <name type="ordered locus">YPN_0365</name>
    <name type="ORF">YP516_0373</name>
</gene>
<feature type="chain" id="PRO_1000083675" description="Protein ApaG">
    <location>
        <begin position="1"/>
        <end position="125"/>
    </location>
</feature>
<feature type="domain" description="ApaG" evidence="1">
    <location>
        <begin position="1"/>
        <end position="125"/>
    </location>
</feature>